<dbReference type="EC" id="2.7.4.8" evidence="1"/>
<dbReference type="EMBL" id="AE008692">
    <property type="protein sequence ID" value="AAV89057.1"/>
    <property type="molecule type" value="Genomic_DNA"/>
</dbReference>
<dbReference type="RefSeq" id="WP_011240347.1">
    <property type="nucleotide sequence ID" value="NZ_CP035711.1"/>
</dbReference>
<dbReference type="SMR" id="Q5NQE8"/>
<dbReference type="STRING" id="264203.ZMO0433"/>
<dbReference type="GeneID" id="79904369"/>
<dbReference type="KEGG" id="zmo:ZMO0433"/>
<dbReference type="eggNOG" id="COG0194">
    <property type="taxonomic scope" value="Bacteria"/>
</dbReference>
<dbReference type="HOGENOM" id="CLU_001715_1_0_5"/>
<dbReference type="Proteomes" id="UP000001173">
    <property type="component" value="Chromosome"/>
</dbReference>
<dbReference type="GO" id="GO:0005829">
    <property type="term" value="C:cytosol"/>
    <property type="evidence" value="ECO:0007669"/>
    <property type="project" value="TreeGrafter"/>
</dbReference>
<dbReference type="GO" id="GO:0005524">
    <property type="term" value="F:ATP binding"/>
    <property type="evidence" value="ECO:0007669"/>
    <property type="project" value="UniProtKB-UniRule"/>
</dbReference>
<dbReference type="GO" id="GO:0004385">
    <property type="term" value="F:guanylate kinase activity"/>
    <property type="evidence" value="ECO:0007669"/>
    <property type="project" value="UniProtKB-UniRule"/>
</dbReference>
<dbReference type="CDD" id="cd00071">
    <property type="entry name" value="GMPK"/>
    <property type="match status" value="1"/>
</dbReference>
<dbReference type="FunFam" id="3.30.63.10:FF:000002">
    <property type="entry name" value="Guanylate kinase 1"/>
    <property type="match status" value="1"/>
</dbReference>
<dbReference type="Gene3D" id="3.30.63.10">
    <property type="entry name" value="Guanylate Kinase phosphate binding domain"/>
    <property type="match status" value="1"/>
</dbReference>
<dbReference type="Gene3D" id="3.40.50.300">
    <property type="entry name" value="P-loop containing nucleotide triphosphate hydrolases"/>
    <property type="match status" value="2"/>
</dbReference>
<dbReference type="HAMAP" id="MF_00328">
    <property type="entry name" value="Guanylate_kinase"/>
    <property type="match status" value="1"/>
</dbReference>
<dbReference type="InterPro" id="IPR008145">
    <property type="entry name" value="GK/Ca_channel_bsu"/>
</dbReference>
<dbReference type="InterPro" id="IPR008144">
    <property type="entry name" value="Guanylate_kin-like_dom"/>
</dbReference>
<dbReference type="InterPro" id="IPR017665">
    <property type="entry name" value="Guanylate_kinase"/>
</dbReference>
<dbReference type="InterPro" id="IPR020590">
    <property type="entry name" value="Guanylate_kinase_CS"/>
</dbReference>
<dbReference type="InterPro" id="IPR027417">
    <property type="entry name" value="P-loop_NTPase"/>
</dbReference>
<dbReference type="NCBIfam" id="TIGR03263">
    <property type="entry name" value="guanyl_kin"/>
    <property type="match status" value="1"/>
</dbReference>
<dbReference type="PANTHER" id="PTHR23117:SF13">
    <property type="entry name" value="GUANYLATE KINASE"/>
    <property type="match status" value="1"/>
</dbReference>
<dbReference type="PANTHER" id="PTHR23117">
    <property type="entry name" value="GUANYLATE KINASE-RELATED"/>
    <property type="match status" value="1"/>
</dbReference>
<dbReference type="Pfam" id="PF00625">
    <property type="entry name" value="Guanylate_kin"/>
    <property type="match status" value="1"/>
</dbReference>
<dbReference type="SMART" id="SM00072">
    <property type="entry name" value="GuKc"/>
    <property type="match status" value="1"/>
</dbReference>
<dbReference type="SUPFAM" id="SSF52540">
    <property type="entry name" value="P-loop containing nucleoside triphosphate hydrolases"/>
    <property type="match status" value="1"/>
</dbReference>
<dbReference type="PROSITE" id="PS00856">
    <property type="entry name" value="GUANYLATE_KINASE_1"/>
    <property type="match status" value="1"/>
</dbReference>
<dbReference type="PROSITE" id="PS50052">
    <property type="entry name" value="GUANYLATE_KINASE_2"/>
    <property type="match status" value="1"/>
</dbReference>
<name>KGUA_ZYMMO</name>
<proteinExistence type="inferred from homology"/>
<sequence>MPSANFRLARRGLLFVISSPSGAGKSTIARRILAEDDEIHLSVSVTTRPKRPGEVDGVDYHFVDVPTFKKMVAENQLLEWAHVFDNRYGTPRAPVEEMLHKGQDVLFDIDWQGAQQLWQQASGDTIRVYILPPSFEELERRLRGRGTDSEEVIQKRMARAASEISHWDGYDYVLINDDMDECVKQVKNILTVERIKRRRQIGLIGFTRKLLAPPED</sequence>
<protein>
    <recommendedName>
        <fullName evidence="1">Guanylate kinase</fullName>
        <ecNumber evidence="1">2.7.4.8</ecNumber>
    </recommendedName>
    <alternativeName>
        <fullName evidence="1">GMP kinase</fullName>
    </alternativeName>
</protein>
<comment type="function">
    <text evidence="1">Essential for recycling GMP and indirectly, cGMP.</text>
</comment>
<comment type="catalytic activity">
    <reaction evidence="1">
        <text>GMP + ATP = GDP + ADP</text>
        <dbReference type="Rhea" id="RHEA:20780"/>
        <dbReference type="ChEBI" id="CHEBI:30616"/>
        <dbReference type="ChEBI" id="CHEBI:58115"/>
        <dbReference type="ChEBI" id="CHEBI:58189"/>
        <dbReference type="ChEBI" id="CHEBI:456216"/>
        <dbReference type="EC" id="2.7.4.8"/>
    </reaction>
</comment>
<comment type="subcellular location">
    <subcellularLocation>
        <location evidence="1">Cytoplasm</location>
    </subcellularLocation>
</comment>
<comment type="similarity">
    <text evidence="1">Belongs to the guanylate kinase family.</text>
</comment>
<reference key="1">
    <citation type="journal article" date="2005" name="Nat. Biotechnol.">
        <title>The genome sequence of the ethanologenic bacterium Zymomonas mobilis ZM4.</title>
        <authorList>
            <person name="Seo J.-S."/>
            <person name="Chong H."/>
            <person name="Park H.S."/>
            <person name="Yoon K.-O."/>
            <person name="Jung C."/>
            <person name="Kim J.J."/>
            <person name="Hong J.H."/>
            <person name="Kim H."/>
            <person name="Kim J.-H."/>
            <person name="Kil J.-I."/>
            <person name="Park C.J."/>
            <person name="Oh H.-M."/>
            <person name="Lee J.-S."/>
            <person name="Jin S.-J."/>
            <person name="Um H.-W."/>
            <person name="Lee H.-J."/>
            <person name="Oh S.-J."/>
            <person name="Kim J.Y."/>
            <person name="Kang H.L."/>
            <person name="Lee S.Y."/>
            <person name="Lee K.J."/>
            <person name="Kang H.S."/>
        </authorList>
    </citation>
    <scope>NUCLEOTIDE SEQUENCE [LARGE SCALE GENOMIC DNA]</scope>
    <source>
        <strain>ATCC 31821 / ZM4 / CP4</strain>
    </source>
</reference>
<organism>
    <name type="scientific">Zymomonas mobilis subsp. mobilis (strain ATCC 31821 / ZM4 / CP4)</name>
    <dbReference type="NCBI Taxonomy" id="264203"/>
    <lineage>
        <taxon>Bacteria</taxon>
        <taxon>Pseudomonadati</taxon>
        <taxon>Pseudomonadota</taxon>
        <taxon>Alphaproteobacteria</taxon>
        <taxon>Sphingomonadales</taxon>
        <taxon>Zymomonadaceae</taxon>
        <taxon>Zymomonas</taxon>
    </lineage>
</organism>
<evidence type="ECO:0000255" key="1">
    <source>
        <dbReference type="HAMAP-Rule" id="MF_00328"/>
    </source>
</evidence>
<accession>Q5NQE8</accession>
<keyword id="KW-0067">ATP-binding</keyword>
<keyword id="KW-0963">Cytoplasm</keyword>
<keyword id="KW-0418">Kinase</keyword>
<keyword id="KW-0547">Nucleotide-binding</keyword>
<keyword id="KW-1185">Reference proteome</keyword>
<keyword id="KW-0808">Transferase</keyword>
<gene>
    <name evidence="1" type="primary">gmk</name>
    <name type="ordered locus">ZMO0433</name>
</gene>
<feature type="chain" id="PRO_0000170649" description="Guanylate kinase">
    <location>
        <begin position="1"/>
        <end position="216"/>
    </location>
</feature>
<feature type="domain" description="Guanylate kinase-like" evidence="1">
    <location>
        <begin position="12"/>
        <end position="191"/>
    </location>
</feature>
<feature type="binding site" evidence="1">
    <location>
        <begin position="19"/>
        <end position="26"/>
    </location>
    <ligand>
        <name>ATP</name>
        <dbReference type="ChEBI" id="CHEBI:30616"/>
    </ligand>
</feature>